<proteinExistence type="evidence at transcript level"/>
<reference key="1">
    <citation type="journal article" date="2005" name="Genome Biol.">
        <title>Full-length cDNAs from chicken bursal lymphocytes to facilitate gene function analysis.</title>
        <authorList>
            <person name="Caldwell R.B."/>
            <person name="Kierzek A.M."/>
            <person name="Arakawa H."/>
            <person name="Bezzubov Y."/>
            <person name="Zaim J."/>
            <person name="Fiedler P."/>
            <person name="Kutter S."/>
            <person name="Blagodatski A."/>
            <person name="Kostovska D."/>
            <person name="Koter M."/>
            <person name="Plachy J."/>
            <person name="Carninci P."/>
            <person name="Hayashizaki Y."/>
            <person name="Buerstedde J.-M."/>
        </authorList>
    </citation>
    <scope>NUCLEOTIDE SEQUENCE [LARGE SCALE MRNA]</scope>
    <source>
        <strain>CB</strain>
        <tissue>Bursa of Fabricius</tissue>
    </source>
</reference>
<name>CPIN1_CHICK</name>
<dbReference type="EMBL" id="AJ720532">
    <property type="protein sequence ID" value="CAG32191.1"/>
    <property type="molecule type" value="mRNA"/>
</dbReference>
<dbReference type="SMR" id="Q5ZJA2"/>
<dbReference type="FunCoup" id="Q5ZJA2">
    <property type="interactions" value="2552"/>
</dbReference>
<dbReference type="STRING" id="9031.ENSGALP00000049903"/>
<dbReference type="PaxDb" id="9031-ENSGALP00000001808"/>
<dbReference type="VEuPathDB" id="HostDB:geneid_415637"/>
<dbReference type="eggNOG" id="KOG4020">
    <property type="taxonomic scope" value="Eukaryota"/>
</dbReference>
<dbReference type="InParanoid" id="Q5ZJA2"/>
<dbReference type="OrthoDB" id="311633at2759"/>
<dbReference type="PhylomeDB" id="Q5ZJA2"/>
<dbReference type="Proteomes" id="UP000000539">
    <property type="component" value="Unassembled WGS sequence"/>
</dbReference>
<dbReference type="GO" id="GO:0005737">
    <property type="term" value="C:cytoplasm"/>
    <property type="evidence" value="ECO:0000318"/>
    <property type="project" value="GO_Central"/>
</dbReference>
<dbReference type="GO" id="GO:0005758">
    <property type="term" value="C:mitochondrial intermembrane space"/>
    <property type="evidence" value="ECO:0007669"/>
    <property type="project" value="UniProtKB-SubCell"/>
</dbReference>
<dbReference type="GO" id="GO:0005634">
    <property type="term" value="C:nucleus"/>
    <property type="evidence" value="ECO:0007669"/>
    <property type="project" value="UniProtKB-SubCell"/>
</dbReference>
<dbReference type="GO" id="GO:0051537">
    <property type="term" value="F:2 iron, 2 sulfur cluster binding"/>
    <property type="evidence" value="ECO:0000250"/>
    <property type="project" value="UniProtKB"/>
</dbReference>
<dbReference type="GO" id="GO:0051539">
    <property type="term" value="F:4 iron, 4 sulfur cluster binding"/>
    <property type="evidence" value="ECO:0007669"/>
    <property type="project" value="UniProtKB-KW"/>
</dbReference>
<dbReference type="GO" id="GO:0009055">
    <property type="term" value="F:electron transfer activity"/>
    <property type="evidence" value="ECO:0007669"/>
    <property type="project" value="UniProtKB-UniRule"/>
</dbReference>
<dbReference type="GO" id="GO:0046872">
    <property type="term" value="F:metal ion binding"/>
    <property type="evidence" value="ECO:0007669"/>
    <property type="project" value="UniProtKB-KW"/>
</dbReference>
<dbReference type="GO" id="GO:0006915">
    <property type="term" value="P:apoptotic process"/>
    <property type="evidence" value="ECO:0007669"/>
    <property type="project" value="UniProtKB-KW"/>
</dbReference>
<dbReference type="GO" id="GO:0030097">
    <property type="term" value="P:hemopoiesis"/>
    <property type="evidence" value="ECO:0007669"/>
    <property type="project" value="UniProtKB-UniRule"/>
</dbReference>
<dbReference type="GO" id="GO:0016226">
    <property type="term" value="P:iron-sulfur cluster assembly"/>
    <property type="evidence" value="ECO:0000318"/>
    <property type="project" value="GO_Central"/>
</dbReference>
<dbReference type="GO" id="GO:0043066">
    <property type="term" value="P:negative regulation of apoptotic process"/>
    <property type="evidence" value="ECO:0007669"/>
    <property type="project" value="UniProtKB-UniRule"/>
</dbReference>
<dbReference type="CDD" id="cd02440">
    <property type="entry name" value="AdoMet_MTases"/>
    <property type="match status" value="1"/>
</dbReference>
<dbReference type="FunFam" id="3.40.50.150:FF:000085">
    <property type="entry name" value="Anamorsin homolog"/>
    <property type="match status" value="1"/>
</dbReference>
<dbReference type="Gene3D" id="3.40.50.150">
    <property type="entry name" value="Vaccinia Virus protein VP39"/>
    <property type="match status" value="1"/>
</dbReference>
<dbReference type="HAMAP" id="MF_03115">
    <property type="entry name" value="Anamorsin"/>
    <property type="match status" value="1"/>
</dbReference>
<dbReference type="InterPro" id="IPR007785">
    <property type="entry name" value="Anamorsin"/>
</dbReference>
<dbReference type="InterPro" id="IPR049011">
    <property type="entry name" value="Anamorsin_N_metazoan"/>
</dbReference>
<dbReference type="InterPro" id="IPR046408">
    <property type="entry name" value="CIAPIN1"/>
</dbReference>
<dbReference type="InterPro" id="IPR029063">
    <property type="entry name" value="SAM-dependent_MTases_sf"/>
</dbReference>
<dbReference type="PANTHER" id="PTHR13273">
    <property type="entry name" value="ANAMORSIN"/>
    <property type="match status" value="1"/>
</dbReference>
<dbReference type="PANTHER" id="PTHR13273:SF14">
    <property type="entry name" value="ANAMORSIN"/>
    <property type="match status" value="1"/>
</dbReference>
<dbReference type="Pfam" id="PF20922">
    <property type="entry name" value="Anamorsin_N"/>
    <property type="match status" value="1"/>
</dbReference>
<dbReference type="Pfam" id="PF05093">
    <property type="entry name" value="CIAPIN1"/>
    <property type="match status" value="2"/>
</dbReference>
<dbReference type="SUPFAM" id="SSF53335">
    <property type="entry name" value="S-adenosyl-L-methionine-dependent methyltransferases"/>
    <property type="match status" value="1"/>
</dbReference>
<sequence length="306" mass="32638">MGEYGIAPGQRVAVIWDSSSPVEALKGLVDAVQASVGADSRVSVENINQLCQSAHRESSFDVILSGVVPGSTAQHSAEVLAEIARILKPGGRVLLKEPVVTESENNSQIKTAAKLPAALTLSGLVEVKGLQKEPLTAEEAQSVREHLGYQGNDLLIVQIEGRKPNFEVGSSSQLKLSFAKKTSPSGKPSVDPATAKLWTLSASDMNDEEMDLLDSDELLDSEDLKKPDPASLRAPSCKEKGKKKACKNCTCGLAEELEQEKKSSQPKSACGNCYLGDAFRCASCPYLGDACLQAWREDPAEREPAA</sequence>
<feature type="chain" id="PRO_0000392301" description="Anamorsin">
    <location>
        <begin position="1"/>
        <end position="306"/>
    </location>
</feature>
<feature type="region of interest" description="N-terminal SAM-like domain" evidence="1">
    <location>
        <begin position="6"/>
        <end position="172"/>
    </location>
</feature>
<feature type="region of interest" description="Linker" evidence="1">
    <location>
        <begin position="173"/>
        <end position="224"/>
    </location>
</feature>
<feature type="region of interest" description="Fe-S binding site A" evidence="1">
    <location>
        <begin position="237"/>
        <end position="251"/>
    </location>
</feature>
<feature type="region of interest" description="Fe-S binding site B" evidence="1">
    <location>
        <begin position="270"/>
        <end position="284"/>
    </location>
</feature>
<feature type="short sequence motif" description="Cx2C motif 1" evidence="1">
    <location>
        <begin position="270"/>
        <end position="273"/>
    </location>
</feature>
<feature type="short sequence motif" description="Cx2C motif 2" evidence="1">
    <location>
        <begin position="281"/>
        <end position="284"/>
    </location>
</feature>
<feature type="binding site" evidence="1">
    <location>
        <position position="237"/>
    </location>
    <ligand>
        <name>[2Fe-2S] cluster</name>
        <dbReference type="ChEBI" id="CHEBI:190135"/>
    </ligand>
</feature>
<feature type="binding site" evidence="1">
    <location>
        <position position="246"/>
    </location>
    <ligand>
        <name>[2Fe-2S] cluster</name>
        <dbReference type="ChEBI" id="CHEBI:190135"/>
    </ligand>
</feature>
<feature type="binding site" evidence="1">
    <location>
        <position position="249"/>
    </location>
    <ligand>
        <name>[2Fe-2S] cluster</name>
        <dbReference type="ChEBI" id="CHEBI:190135"/>
    </ligand>
</feature>
<feature type="binding site" evidence="1">
    <location>
        <position position="251"/>
    </location>
    <ligand>
        <name>[2Fe-2S] cluster</name>
        <dbReference type="ChEBI" id="CHEBI:190135"/>
    </ligand>
</feature>
<feature type="binding site" evidence="1">
    <location>
        <position position="270"/>
    </location>
    <ligand>
        <name>[4Fe-4S] cluster</name>
        <dbReference type="ChEBI" id="CHEBI:49883"/>
    </ligand>
</feature>
<feature type="binding site" evidence="1">
    <location>
        <position position="273"/>
    </location>
    <ligand>
        <name>[4Fe-4S] cluster</name>
        <dbReference type="ChEBI" id="CHEBI:49883"/>
    </ligand>
</feature>
<feature type="binding site" evidence="1">
    <location>
        <position position="281"/>
    </location>
    <ligand>
        <name>[4Fe-4S] cluster</name>
        <dbReference type="ChEBI" id="CHEBI:49883"/>
    </ligand>
</feature>
<feature type="binding site" evidence="1">
    <location>
        <position position="284"/>
    </location>
    <ligand>
        <name>[4Fe-4S] cluster</name>
        <dbReference type="ChEBI" id="CHEBI:49883"/>
    </ligand>
</feature>
<protein>
    <recommendedName>
        <fullName evidence="1">Anamorsin</fullName>
    </recommendedName>
    <alternativeName>
        <fullName evidence="1">Cytokine-induced apoptosis inhibitor 1</fullName>
    </alternativeName>
    <alternativeName>
        <fullName evidence="1">Fe-S cluster assembly protein DRE2 homolog</fullName>
    </alternativeName>
</protein>
<comment type="function">
    <text evidence="1">Component of the cytosolic iron-sulfur (Fe-S) protein assembly (CIA) machinery required for the maturation of extramitochondrial Fe-S proteins. Part of an electron transfer chain functioning in an early step of cytosolic Fe-S biogenesis, facilitating the de novo assembly of a [4Fe-4S] cluster on the scaffold complex NUBP1-NUBP2. Electrons are transferred to CIAPIN1 from NADPH via the FAD- and FMN-containing protein NDOR1. NDOR1-CIAPIN1 are also required for the assembly of the diferric tyrosyl radical cofactor of ribonucleotide reductase (RNR), probably by providing electrons for reduction during radical cofactor maturation in the catalytic small subunit. Has anti-apoptotic effects in the cell. Involved in negative control of cell death upon cytokine withdrawal. Promotes development of hematopoietic cells.</text>
</comment>
<comment type="cofactor">
    <cofactor evidence="1">
        <name>[2Fe-2S] cluster</name>
        <dbReference type="ChEBI" id="CHEBI:190135"/>
    </cofactor>
</comment>
<comment type="cofactor">
    <cofactor evidence="1">
        <name>[4Fe-4S] cluster</name>
        <dbReference type="ChEBI" id="CHEBI:49883"/>
    </cofactor>
</comment>
<comment type="subunit">
    <text evidence="1">Monomer. Interacts with NDOR1. Interacts with CHCHD4.</text>
</comment>
<comment type="subcellular location">
    <subcellularLocation>
        <location evidence="1">Cytoplasm</location>
    </subcellularLocation>
    <subcellularLocation>
        <location evidence="1">Nucleus</location>
    </subcellularLocation>
    <subcellularLocation>
        <location evidence="1">Mitochondrion intermembrane space</location>
    </subcellularLocation>
</comment>
<comment type="domain">
    <text evidence="1">The twin Cx2C motifs are involved in the recognition by the mitochondrial CHCHD4/MIA40-GFER/ERV1 disulfide relay system. The formation of 2 disulfide bonds in the Cx2C motifs through dithiol/disulfide exchange reactions effectively traps the protein in the mitochondrial intermembrane space.</text>
</comment>
<comment type="domain">
    <text evidence="1">The C-terminal domain binds 2 Fe-S clusters but is otherwise mostly in an intrinsically disordered conformation.</text>
</comment>
<comment type="domain">
    <text evidence="1">The N-terminal domain has structural similarity with S-adenosyl-L-methionine-dependent methyltransferases, but does not bind S-adenosyl-L-methionine. It is required for correct assembly of the 2 Fe-S clusters.</text>
</comment>
<comment type="similarity">
    <text evidence="1">Belongs to the anamorsin family.</text>
</comment>
<evidence type="ECO:0000255" key="1">
    <source>
        <dbReference type="HAMAP-Rule" id="MF_03115"/>
    </source>
</evidence>
<accession>Q5ZJA2</accession>
<keyword id="KW-0001">2Fe-2S</keyword>
<keyword id="KW-0004">4Fe-4S</keyword>
<keyword id="KW-0053">Apoptosis</keyword>
<keyword id="KW-0963">Cytoplasm</keyword>
<keyword id="KW-0408">Iron</keyword>
<keyword id="KW-0411">Iron-sulfur</keyword>
<keyword id="KW-0479">Metal-binding</keyword>
<keyword id="KW-0496">Mitochondrion</keyword>
<keyword id="KW-0539">Nucleus</keyword>
<keyword id="KW-1185">Reference proteome</keyword>
<organism>
    <name type="scientific">Gallus gallus</name>
    <name type="common">Chicken</name>
    <dbReference type="NCBI Taxonomy" id="9031"/>
    <lineage>
        <taxon>Eukaryota</taxon>
        <taxon>Metazoa</taxon>
        <taxon>Chordata</taxon>
        <taxon>Craniata</taxon>
        <taxon>Vertebrata</taxon>
        <taxon>Euteleostomi</taxon>
        <taxon>Archelosauria</taxon>
        <taxon>Archosauria</taxon>
        <taxon>Dinosauria</taxon>
        <taxon>Saurischia</taxon>
        <taxon>Theropoda</taxon>
        <taxon>Coelurosauria</taxon>
        <taxon>Aves</taxon>
        <taxon>Neognathae</taxon>
        <taxon>Galloanserae</taxon>
        <taxon>Galliformes</taxon>
        <taxon>Phasianidae</taxon>
        <taxon>Phasianinae</taxon>
        <taxon>Gallus</taxon>
    </lineage>
</organism>
<gene>
    <name evidence="1" type="primary">CIAPIN1</name>
    <name type="ORF">RCJMB04_19l6</name>
</gene>